<gene>
    <name type="primary">GLN1</name>
    <name type="synonym">FGS</name>
    <name type="ordered locus">CNA04370</name>
</gene>
<dbReference type="EC" id="6.3.1.2"/>
<dbReference type="EMBL" id="AJ414581">
    <property type="protein sequence ID" value="CAD10037.1"/>
    <property type="molecule type" value="mRNA"/>
</dbReference>
<dbReference type="EMBL" id="AE017341">
    <property type="protein sequence ID" value="AAW40974.1"/>
    <property type="molecule type" value="Genomic_DNA"/>
</dbReference>
<dbReference type="EMBL" id="AE017341">
    <property type="protein sequence ID" value="ALO60332.1"/>
    <property type="molecule type" value="Genomic_DNA"/>
</dbReference>
<dbReference type="RefSeq" id="XP_566793.1">
    <property type="nucleotide sequence ID" value="XM_566793.1"/>
</dbReference>
<dbReference type="RefSeq" id="XP_566794.1">
    <property type="nucleotide sequence ID" value="XM_566794.1"/>
</dbReference>
<dbReference type="SMR" id="P0CN84"/>
<dbReference type="FunCoup" id="P0CN84">
    <property type="interactions" value="465"/>
</dbReference>
<dbReference type="STRING" id="214684.P0CN84"/>
<dbReference type="PaxDb" id="214684-P0CN84"/>
<dbReference type="EnsemblFungi" id="AAW40974">
    <property type="protein sequence ID" value="AAW40974"/>
    <property type="gene ID" value="CNA04370"/>
</dbReference>
<dbReference type="EnsemblFungi" id="ALO60332">
    <property type="protein sequence ID" value="ALO60332"/>
    <property type="gene ID" value="CNA04370"/>
</dbReference>
<dbReference type="GeneID" id="3253352"/>
<dbReference type="VEuPathDB" id="FungiDB:CNA04370"/>
<dbReference type="eggNOG" id="KOG0683">
    <property type="taxonomic scope" value="Eukaryota"/>
</dbReference>
<dbReference type="HOGENOM" id="CLU_036762_1_1_1"/>
<dbReference type="InParanoid" id="P0CN84"/>
<dbReference type="OMA" id="DRRPNAN"/>
<dbReference type="OrthoDB" id="1936100at2759"/>
<dbReference type="Proteomes" id="UP000002149">
    <property type="component" value="Chromosome 1"/>
</dbReference>
<dbReference type="GO" id="GO:0005737">
    <property type="term" value="C:cytoplasm"/>
    <property type="evidence" value="ECO:0000318"/>
    <property type="project" value="GO_Central"/>
</dbReference>
<dbReference type="GO" id="GO:0005524">
    <property type="term" value="F:ATP binding"/>
    <property type="evidence" value="ECO:0007669"/>
    <property type="project" value="UniProtKB-KW"/>
</dbReference>
<dbReference type="GO" id="GO:0004356">
    <property type="term" value="F:glutamine synthetase activity"/>
    <property type="evidence" value="ECO:0000318"/>
    <property type="project" value="GO_Central"/>
</dbReference>
<dbReference type="GO" id="GO:0006542">
    <property type="term" value="P:glutamine biosynthetic process"/>
    <property type="evidence" value="ECO:0000318"/>
    <property type="project" value="GO_Central"/>
</dbReference>
<dbReference type="FunFam" id="3.10.20.70:FF:000004">
    <property type="entry name" value="Glutamine synthetase"/>
    <property type="match status" value="1"/>
</dbReference>
<dbReference type="FunFam" id="3.30.590.10:FF:000004">
    <property type="entry name" value="Glutamine synthetase"/>
    <property type="match status" value="1"/>
</dbReference>
<dbReference type="Gene3D" id="3.10.20.70">
    <property type="entry name" value="Glutamine synthetase, N-terminal domain"/>
    <property type="match status" value="1"/>
</dbReference>
<dbReference type="Gene3D" id="3.30.590.10">
    <property type="entry name" value="Glutamine synthetase/guanido kinase, catalytic domain"/>
    <property type="match status" value="1"/>
</dbReference>
<dbReference type="InterPro" id="IPR008147">
    <property type="entry name" value="Gln_synt_N"/>
</dbReference>
<dbReference type="InterPro" id="IPR036651">
    <property type="entry name" value="Gln_synt_N_sf"/>
</dbReference>
<dbReference type="InterPro" id="IPR014746">
    <property type="entry name" value="Gln_synth/guanido_kin_cat_dom"/>
</dbReference>
<dbReference type="InterPro" id="IPR008146">
    <property type="entry name" value="Gln_synth_cat_dom"/>
</dbReference>
<dbReference type="InterPro" id="IPR027303">
    <property type="entry name" value="Gln_synth_gly_rich_site"/>
</dbReference>
<dbReference type="InterPro" id="IPR027302">
    <property type="entry name" value="Gln_synth_N_conserv_site"/>
</dbReference>
<dbReference type="InterPro" id="IPR050292">
    <property type="entry name" value="Glutamine_Synthetase"/>
</dbReference>
<dbReference type="PANTHER" id="PTHR20852">
    <property type="entry name" value="GLUTAMINE SYNTHETASE"/>
    <property type="match status" value="1"/>
</dbReference>
<dbReference type="PANTHER" id="PTHR20852:SF57">
    <property type="entry name" value="GLUTAMINE SYNTHETASE 2 CYTOPLASMIC"/>
    <property type="match status" value="1"/>
</dbReference>
<dbReference type="Pfam" id="PF00120">
    <property type="entry name" value="Gln-synt_C"/>
    <property type="match status" value="1"/>
</dbReference>
<dbReference type="Pfam" id="PF03951">
    <property type="entry name" value="Gln-synt_N"/>
    <property type="match status" value="1"/>
</dbReference>
<dbReference type="SMART" id="SM01230">
    <property type="entry name" value="Gln-synt_C"/>
    <property type="match status" value="1"/>
</dbReference>
<dbReference type="SUPFAM" id="SSF54368">
    <property type="entry name" value="Glutamine synthetase, N-terminal domain"/>
    <property type="match status" value="1"/>
</dbReference>
<dbReference type="SUPFAM" id="SSF55931">
    <property type="entry name" value="Glutamine synthetase/guanido kinase"/>
    <property type="match status" value="1"/>
</dbReference>
<dbReference type="PROSITE" id="PS00180">
    <property type="entry name" value="GLNA_1"/>
    <property type="match status" value="1"/>
</dbReference>
<dbReference type="PROSITE" id="PS00181">
    <property type="entry name" value="GLNA_ATP"/>
    <property type="match status" value="1"/>
</dbReference>
<dbReference type="PROSITE" id="PS51986">
    <property type="entry name" value="GS_BETA_GRASP"/>
    <property type="match status" value="1"/>
</dbReference>
<dbReference type="PROSITE" id="PS51987">
    <property type="entry name" value="GS_CATALYTIC"/>
    <property type="match status" value="1"/>
</dbReference>
<organism>
    <name type="scientific">Cryptococcus neoformans var. neoformans serotype D (strain JEC21 / ATCC MYA-565)</name>
    <name type="common">Filobasidiella neoformans</name>
    <dbReference type="NCBI Taxonomy" id="214684"/>
    <lineage>
        <taxon>Eukaryota</taxon>
        <taxon>Fungi</taxon>
        <taxon>Dikarya</taxon>
        <taxon>Basidiomycota</taxon>
        <taxon>Agaricomycotina</taxon>
        <taxon>Tremellomycetes</taxon>
        <taxon>Tremellales</taxon>
        <taxon>Cryptococcaceae</taxon>
        <taxon>Cryptococcus</taxon>
        <taxon>Cryptococcus neoformans species complex</taxon>
    </lineage>
</organism>
<feature type="chain" id="PRO_0000153154" description="Glutamine synthetase">
    <location>
        <begin position="1"/>
        <end position="358"/>
    </location>
</feature>
<feature type="domain" description="GS beta-grasp" evidence="2">
    <location>
        <begin position="25"/>
        <end position="104"/>
    </location>
</feature>
<feature type="domain" description="GS catalytic" evidence="3">
    <location>
        <begin position="111"/>
        <end position="358"/>
    </location>
</feature>
<feature type="sequence conflict" description="In Ref. 1; CAD10037." evidence="4" ref="1">
    <original>A</original>
    <variation>P</variation>
    <location>
        <position position="219"/>
    </location>
</feature>
<evidence type="ECO:0000250" key="1"/>
<evidence type="ECO:0000255" key="2">
    <source>
        <dbReference type="PROSITE-ProRule" id="PRU01330"/>
    </source>
</evidence>
<evidence type="ECO:0000255" key="3">
    <source>
        <dbReference type="PROSITE-ProRule" id="PRU01331"/>
    </source>
</evidence>
<evidence type="ECO:0000305" key="4"/>
<proteinExistence type="evidence at transcript level"/>
<keyword id="KW-0067">ATP-binding</keyword>
<keyword id="KW-0963">Cytoplasm</keyword>
<keyword id="KW-0436">Ligase</keyword>
<keyword id="KW-0547">Nucleotide-binding</keyword>
<keyword id="KW-1185">Reference proteome</keyword>
<accession>P0CN84</accession>
<accession>A0A0S2LIP1</accession>
<accession>D3NQ34</accession>
<accession>Q55ZS0</accession>
<accession>Q5KP31</accession>
<accession>Q96UG9</accession>
<protein>
    <recommendedName>
        <fullName>Glutamine synthetase</fullName>
        <shortName>GS</shortName>
        <ecNumber>6.3.1.2</ecNumber>
    </recommendedName>
    <alternativeName>
        <fullName>Glutamate--ammonia ligase</fullName>
    </alternativeName>
</protein>
<reference key="1">
    <citation type="submission" date="2001-09" db="EMBL/GenBank/DDBJ databases">
        <title>Immunostimulating glutamine synthetase.</title>
        <authorList>
            <person name="Biondo C."/>
            <person name="Beninati C."/>
            <person name="Delfino D."/>
            <person name="Mancuso G."/>
            <person name="Midiri A."/>
            <person name="Tomaselli G."/>
            <person name="Teti G."/>
        </authorList>
    </citation>
    <scope>NUCLEOTIDE SEQUENCE [MRNA]</scope>
    <source>
        <strain>309 CAP 67</strain>
    </source>
</reference>
<reference key="2">
    <citation type="journal article" date="2005" name="Science">
        <title>The genome of the basidiomycetous yeast and human pathogen Cryptococcus neoformans.</title>
        <authorList>
            <person name="Loftus B.J."/>
            <person name="Fung E."/>
            <person name="Roncaglia P."/>
            <person name="Rowley D."/>
            <person name="Amedeo P."/>
            <person name="Bruno D."/>
            <person name="Vamathevan J."/>
            <person name="Miranda M."/>
            <person name="Anderson I.J."/>
            <person name="Fraser J.A."/>
            <person name="Allen J.E."/>
            <person name="Bosdet I.E."/>
            <person name="Brent M.R."/>
            <person name="Chiu R."/>
            <person name="Doering T.L."/>
            <person name="Donlin M.J."/>
            <person name="D'Souza C.A."/>
            <person name="Fox D.S."/>
            <person name="Grinberg V."/>
            <person name="Fu J."/>
            <person name="Fukushima M."/>
            <person name="Haas B.J."/>
            <person name="Huang J.C."/>
            <person name="Janbon G."/>
            <person name="Jones S.J.M."/>
            <person name="Koo H.L."/>
            <person name="Krzywinski M.I."/>
            <person name="Kwon-Chung K.J."/>
            <person name="Lengeler K.B."/>
            <person name="Maiti R."/>
            <person name="Marra M.A."/>
            <person name="Marra R.E."/>
            <person name="Mathewson C.A."/>
            <person name="Mitchell T.G."/>
            <person name="Pertea M."/>
            <person name="Riggs F.R."/>
            <person name="Salzberg S.L."/>
            <person name="Schein J.E."/>
            <person name="Shvartsbeyn A."/>
            <person name="Shin H."/>
            <person name="Shumway M."/>
            <person name="Specht C.A."/>
            <person name="Suh B.B."/>
            <person name="Tenney A."/>
            <person name="Utterback T.R."/>
            <person name="Wickes B.L."/>
            <person name="Wortman J.R."/>
            <person name="Wye N.H."/>
            <person name="Kronstad J.W."/>
            <person name="Lodge J.K."/>
            <person name="Heitman J."/>
            <person name="Davis R.W."/>
            <person name="Fraser C.M."/>
            <person name="Hyman R.W."/>
        </authorList>
    </citation>
    <scope>NUCLEOTIDE SEQUENCE [LARGE SCALE GENOMIC DNA]</scope>
    <source>
        <strain>JEC21 / ATCC MYA-565</strain>
    </source>
</reference>
<sequence length="358" mass="39516">MSQLIATKRVDLLAPYLALDQGSRVQAEYIWIDAEGGIRSKTMTLDKAPSSVADLKEWNFDGSSTNQAPADNSDVFLRPVAIFKDPFRGGANILVLCECYDNDGTPNKSNYRAHCKKVMDAAKDTEPWFGLEQEYTLFDADGQVFGWPKNGFPGPQGPYYCGVGAGKVFARDFIEAHYRACLYAGIKISGINAEVMPSQWEFQVGPCTGIEMGDHLWMARFLLLRIGEEWGITPSLHPKPLKGDWNGAGCHSNYSTKDMRTPGKGMAAIEDAIKKLEKKHLEHIAVYGEDNDLRLTGKHETASMTTFSAGVANRGASIRIPRHVGAQGYGYLEDRRPASNVDPYRVTAILVETTVLNN</sequence>
<comment type="catalytic activity">
    <reaction>
        <text>L-glutamate + NH4(+) + ATP = L-glutamine + ADP + phosphate + H(+)</text>
        <dbReference type="Rhea" id="RHEA:16169"/>
        <dbReference type="ChEBI" id="CHEBI:15378"/>
        <dbReference type="ChEBI" id="CHEBI:28938"/>
        <dbReference type="ChEBI" id="CHEBI:29985"/>
        <dbReference type="ChEBI" id="CHEBI:30616"/>
        <dbReference type="ChEBI" id="CHEBI:43474"/>
        <dbReference type="ChEBI" id="CHEBI:58359"/>
        <dbReference type="ChEBI" id="CHEBI:456216"/>
        <dbReference type="EC" id="6.3.1.2"/>
    </reaction>
</comment>
<comment type="subunit">
    <text evidence="1">Homooctamer.</text>
</comment>
<comment type="subcellular location">
    <subcellularLocation>
        <location evidence="1">Cytoplasm</location>
    </subcellularLocation>
</comment>
<comment type="similarity">
    <text evidence="4">Belongs to the glutamine synthetase family.</text>
</comment>
<name>GLNA_CRYNJ</name>